<evidence type="ECO:0000255" key="1">
    <source>
        <dbReference type="HAMAP-Rule" id="MF_01345"/>
    </source>
</evidence>
<evidence type="ECO:0000305" key="2"/>
<organism>
    <name type="scientific">Nitrobacter hamburgensis (strain DSM 10229 / NCIMB 13809 / X14)</name>
    <dbReference type="NCBI Taxonomy" id="323097"/>
    <lineage>
        <taxon>Bacteria</taxon>
        <taxon>Pseudomonadati</taxon>
        <taxon>Pseudomonadota</taxon>
        <taxon>Alphaproteobacteria</taxon>
        <taxon>Hyphomicrobiales</taxon>
        <taxon>Nitrobacteraceae</taxon>
        <taxon>Nitrobacter</taxon>
    </lineage>
</organism>
<protein>
    <recommendedName>
        <fullName evidence="1">Small ribosomal subunit protein uS17</fullName>
    </recommendedName>
    <alternativeName>
        <fullName evidence="2">30S ribosomal protein S17</fullName>
    </alternativeName>
</protein>
<feature type="chain" id="PRO_0000255688" description="Small ribosomal subunit protein uS17">
    <location>
        <begin position="1"/>
        <end position="82"/>
    </location>
</feature>
<comment type="function">
    <text evidence="1">One of the primary rRNA binding proteins, it binds specifically to the 5'-end of 16S ribosomal RNA.</text>
</comment>
<comment type="subunit">
    <text evidence="1">Part of the 30S ribosomal subunit.</text>
</comment>
<comment type="similarity">
    <text evidence="1">Belongs to the universal ribosomal protein uS17 family.</text>
</comment>
<name>RS17_NITHX</name>
<dbReference type="EMBL" id="CP000319">
    <property type="protein sequence ID" value="ABE62376.1"/>
    <property type="molecule type" value="Genomic_DNA"/>
</dbReference>
<dbReference type="RefSeq" id="WP_011510063.1">
    <property type="nucleotide sequence ID" value="NC_007964.1"/>
</dbReference>
<dbReference type="SMR" id="Q1QN21"/>
<dbReference type="STRING" id="323097.Nham_1554"/>
<dbReference type="KEGG" id="nha:Nham_1554"/>
<dbReference type="eggNOG" id="COG0186">
    <property type="taxonomic scope" value="Bacteria"/>
</dbReference>
<dbReference type="HOGENOM" id="CLU_073626_1_1_5"/>
<dbReference type="OrthoDB" id="9811714at2"/>
<dbReference type="Proteomes" id="UP000001953">
    <property type="component" value="Chromosome"/>
</dbReference>
<dbReference type="GO" id="GO:0022627">
    <property type="term" value="C:cytosolic small ribosomal subunit"/>
    <property type="evidence" value="ECO:0007669"/>
    <property type="project" value="TreeGrafter"/>
</dbReference>
<dbReference type="GO" id="GO:0019843">
    <property type="term" value="F:rRNA binding"/>
    <property type="evidence" value="ECO:0007669"/>
    <property type="project" value="UniProtKB-UniRule"/>
</dbReference>
<dbReference type="GO" id="GO:0003735">
    <property type="term" value="F:structural constituent of ribosome"/>
    <property type="evidence" value="ECO:0007669"/>
    <property type="project" value="InterPro"/>
</dbReference>
<dbReference type="GO" id="GO:0006412">
    <property type="term" value="P:translation"/>
    <property type="evidence" value="ECO:0007669"/>
    <property type="project" value="UniProtKB-UniRule"/>
</dbReference>
<dbReference type="CDD" id="cd00364">
    <property type="entry name" value="Ribosomal_uS17"/>
    <property type="match status" value="1"/>
</dbReference>
<dbReference type="FunFam" id="2.40.50.140:FF:000204">
    <property type="entry name" value="30S ribosomal protein S17"/>
    <property type="match status" value="1"/>
</dbReference>
<dbReference type="Gene3D" id="2.40.50.140">
    <property type="entry name" value="Nucleic acid-binding proteins"/>
    <property type="match status" value="1"/>
</dbReference>
<dbReference type="HAMAP" id="MF_01345_B">
    <property type="entry name" value="Ribosomal_uS17_B"/>
    <property type="match status" value="1"/>
</dbReference>
<dbReference type="InterPro" id="IPR012340">
    <property type="entry name" value="NA-bd_OB-fold"/>
</dbReference>
<dbReference type="InterPro" id="IPR000266">
    <property type="entry name" value="Ribosomal_uS17"/>
</dbReference>
<dbReference type="InterPro" id="IPR019984">
    <property type="entry name" value="Ribosomal_uS17_bact/chlr"/>
</dbReference>
<dbReference type="InterPro" id="IPR019979">
    <property type="entry name" value="Ribosomal_uS17_CS"/>
</dbReference>
<dbReference type="NCBIfam" id="NF004123">
    <property type="entry name" value="PRK05610.1"/>
    <property type="match status" value="1"/>
</dbReference>
<dbReference type="NCBIfam" id="TIGR03635">
    <property type="entry name" value="uS17_bact"/>
    <property type="match status" value="1"/>
</dbReference>
<dbReference type="PANTHER" id="PTHR10744">
    <property type="entry name" value="40S RIBOSOMAL PROTEIN S11 FAMILY MEMBER"/>
    <property type="match status" value="1"/>
</dbReference>
<dbReference type="PANTHER" id="PTHR10744:SF1">
    <property type="entry name" value="SMALL RIBOSOMAL SUBUNIT PROTEIN US17M"/>
    <property type="match status" value="1"/>
</dbReference>
<dbReference type="Pfam" id="PF00366">
    <property type="entry name" value="Ribosomal_S17"/>
    <property type="match status" value="1"/>
</dbReference>
<dbReference type="PRINTS" id="PR00973">
    <property type="entry name" value="RIBOSOMALS17"/>
</dbReference>
<dbReference type="SUPFAM" id="SSF50249">
    <property type="entry name" value="Nucleic acid-binding proteins"/>
    <property type="match status" value="1"/>
</dbReference>
<dbReference type="PROSITE" id="PS00056">
    <property type="entry name" value="RIBOSOMAL_S17"/>
    <property type="match status" value="1"/>
</dbReference>
<proteinExistence type="inferred from homology"/>
<reference key="1">
    <citation type="submission" date="2006-03" db="EMBL/GenBank/DDBJ databases">
        <title>Complete sequence of chromosome of Nitrobacter hamburgensis X14.</title>
        <authorList>
            <consortium name="US DOE Joint Genome Institute"/>
            <person name="Copeland A."/>
            <person name="Lucas S."/>
            <person name="Lapidus A."/>
            <person name="Barry K."/>
            <person name="Detter J.C."/>
            <person name="Glavina del Rio T."/>
            <person name="Hammon N."/>
            <person name="Israni S."/>
            <person name="Dalin E."/>
            <person name="Tice H."/>
            <person name="Pitluck S."/>
            <person name="Chain P."/>
            <person name="Malfatti S."/>
            <person name="Shin M."/>
            <person name="Vergez L."/>
            <person name="Schmutz J."/>
            <person name="Larimer F."/>
            <person name="Land M."/>
            <person name="Hauser L."/>
            <person name="Kyrpides N."/>
            <person name="Ivanova N."/>
            <person name="Ward B."/>
            <person name="Arp D."/>
            <person name="Klotz M."/>
            <person name="Stein L."/>
            <person name="O'Mullan G."/>
            <person name="Starkenburg S."/>
            <person name="Sayavedra L."/>
            <person name="Poret-Peterson A.T."/>
            <person name="Gentry M.E."/>
            <person name="Bruce D."/>
            <person name="Richardson P."/>
        </authorList>
    </citation>
    <scope>NUCLEOTIDE SEQUENCE [LARGE SCALE GENOMIC DNA]</scope>
    <source>
        <strain>DSM 10229 / NCIMB 13809 / X14</strain>
    </source>
</reference>
<gene>
    <name evidence="1" type="primary">rpsQ</name>
    <name type="ordered locus">Nham_1554</name>
</gene>
<keyword id="KW-1185">Reference proteome</keyword>
<keyword id="KW-0687">Ribonucleoprotein</keyword>
<keyword id="KW-0689">Ribosomal protein</keyword>
<keyword id="KW-0694">RNA-binding</keyword>
<keyword id="KW-0699">rRNA-binding</keyword>
<accession>Q1QN21</accession>
<sequence>MPKRTLQGVVVSDKQAKTVVVRVDRRFTHPLYKKTIRRSKNYHAHDENNEFKPGDMVWIEESKPISKLKRWTVVRGEQKKTA</sequence>